<gene>
    <name evidence="1" type="primary">metE</name>
    <name type="ordered locus">Plav_0606</name>
</gene>
<organism>
    <name type="scientific">Parvibaculum lavamentivorans (strain DS-1 / DSM 13023 / NCIMB 13966)</name>
    <dbReference type="NCBI Taxonomy" id="402881"/>
    <lineage>
        <taxon>Bacteria</taxon>
        <taxon>Pseudomonadati</taxon>
        <taxon>Pseudomonadota</taxon>
        <taxon>Alphaproteobacteria</taxon>
        <taxon>Hyphomicrobiales</taxon>
        <taxon>Parvibaculaceae</taxon>
        <taxon>Parvibaculum</taxon>
    </lineage>
</organism>
<accession>A7HQP6</accession>
<sequence length="763" mass="84996">MTLTSTLGYPRVGPHRELKAALETYWRDGEEAPLLDTAKSLRRASWRLQKEHGIGHIPSNDFTLYDHVLDTICMTGAVPERFAAGAEIDLATYFAMARGAQDGTRDVAAMEMTKWFDTNYHYIVPEFSPETNFRLAFTKAIDEFAEAKALGVHTRPVLVGPFSFLKLGKATVAGFDPLDLMGRLLPVYENVLKRLAEAGADWVQIDEPCLVLELGSGDLAKCRAAYSALSAAAPSLKLMVATYFGALPEASLETAMALPVAGIHLDMVRGRSQYEAALSALPRDKLLSLGLVDGRNIWRTDMEAALTLAERAVLTLGPKRVMISAACSLLHVPFSLAGEKSLDPELKSWLAFAEEKLGELAVLARGVKEGRTSISTELAENAALFEARRNSPRIHNPAVRARVRDIDPHADRRGRPFADRQSIQQKRFGLPKLPTTTIGSFPQTSDVRKARASLRRGDWNEAQYDAFMKAEIEKTIRLQERIGLDVLVHGEPERTDMVEYFGEKLEGFAFTSLGWVQSYGSRCVKPPIIFGDVSRPEPMTVEWSRYAQSLTDRPVKGMLTGPVTILQWSFVRDDQPRSETCRQIALAIRDEVYDLEAAGLGMIQIDEPALREGLPLHRSEWDTYLRWACECFRLSVCVARDETQIHTHMCYSEFNDIIEAIADLDADVISIETSRSRMELLDAFVDFSYPNDIGPGVYDIHSPRVPARGEMLSLLRLAAERLPSERIWVNPDCGLKTRGWPETEAALVEMVEAARELRNAIGA</sequence>
<evidence type="ECO:0000255" key="1">
    <source>
        <dbReference type="HAMAP-Rule" id="MF_00172"/>
    </source>
</evidence>
<comment type="function">
    <text evidence="1">Catalyzes the transfer of a methyl group from 5-methyltetrahydrofolate to homocysteine resulting in methionine formation.</text>
</comment>
<comment type="catalytic activity">
    <reaction evidence="1">
        <text>5-methyltetrahydropteroyltri-L-glutamate + L-homocysteine = tetrahydropteroyltri-L-glutamate + L-methionine</text>
        <dbReference type="Rhea" id="RHEA:21196"/>
        <dbReference type="ChEBI" id="CHEBI:57844"/>
        <dbReference type="ChEBI" id="CHEBI:58140"/>
        <dbReference type="ChEBI" id="CHEBI:58199"/>
        <dbReference type="ChEBI" id="CHEBI:58207"/>
        <dbReference type="EC" id="2.1.1.14"/>
    </reaction>
</comment>
<comment type="cofactor">
    <cofactor evidence="1">
        <name>Zn(2+)</name>
        <dbReference type="ChEBI" id="CHEBI:29105"/>
    </cofactor>
    <text evidence="1">Binds 1 zinc ion per subunit.</text>
</comment>
<comment type="pathway">
    <text evidence="1">Amino-acid biosynthesis; L-methionine biosynthesis via de novo pathway; L-methionine from L-homocysteine (MetE route): step 1/1.</text>
</comment>
<comment type="similarity">
    <text evidence="1">Belongs to the vitamin-B12 independent methionine synthase family.</text>
</comment>
<reference key="1">
    <citation type="journal article" date="2011" name="Stand. Genomic Sci.">
        <title>Complete genome sequence of Parvibaculum lavamentivorans type strain (DS-1(T)).</title>
        <authorList>
            <person name="Schleheck D."/>
            <person name="Weiss M."/>
            <person name="Pitluck S."/>
            <person name="Bruce D."/>
            <person name="Land M.L."/>
            <person name="Han S."/>
            <person name="Saunders E."/>
            <person name="Tapia R."/>
            <person name="Detter C."/>
            <person name="Brettin T."/>
            <person name="Han J."/>
            <person name="Woyke T."/>
            <person name="Goodwin L."/>
            <person name="Pennacchio L."/>
            <person name="Nolan M."/>
            <person name="Cook A.M."/>
            <person name="Kjelleberg S."/>
            <person name="Thomas T."/>
        </authorList>
    </citation>
    <scope>NUCLEOTIDE SEQUENCE [LARGE SCALE GENOMIC DNA]</scope>
    <source>
        <strain>DS-1 / DSM 13023 / NCIMB 13966</strain>
    </source>
</reference>
<protein>
    <recommendedName>
        <fullName evidence="1">5-methyltetrahydropteroyltriglutamate--homocysteine methyltransferase</fullName>
        <ecNumber evidence="1">2.1.1.14</ecNumber>
    </recommendedName>
    <alternativeName>
        <fullName evidence="1">Cobalamin-independent methionine synthase</fullName>
    </alternativeName>
    <alternativeName>
        <fullName evidence="1">Methionine synthase, vitamin-B12 independent isozyme</fullName>
    </alternativeName>
</protein>
<keyword id="KW-0028">Amino-acid biosynthesis</keyword>
<keyword id="KW-0479">Metal-binding</keyword>
<keyword id="KW-0486">Methionine biosynthesis</keyword>
<keyword id="KW-0489">Methyltransferase</keyword>
<keyword id="KW-1185">Reference proteome</keyword>
<keyword id="KW-0677">Repeat</keyword>
<keyword id="KW-0808">Transferase</keyword>
<keyword id="KW-0862">Zinc</keyword>
<dbReference type="EC" id="2.1.1.14" evidence="1"/>
<dbReference type="EMBL" id="CP000774">
    <property type="protein sequence ID" value="ABS62229.1"/>
    <property type="molecule type" value="Genomic_DNA"/>
</dbReference>
<dbReference type="RefSeq" id="WP_011995520.1">
    <property type="nucleotide sequence ID" value="NC_009719.1"/>
</dbReference>
<dbReference type="SMR" id="A7HQP6"/>
<dbReference type="STRING" id="402881.Plav_0606"/>
<dbReference type="KEGG" id="pla:Plav_0606"/>
<dbReference type="eggNOG" id="COG0620">
    <property type="taxonomic scope" value="Bacteria"/>
</dbReference>
<dbReference type="HOGENOM" id="CLU_013175_0_0_5"/>
<dbReference type="OrthoDB" id="244285at2"/>
<dbReference type="UniPathway" id="UPA00051">
    <property type="reaction ID" value="UER00082"/>
</dbReference>
<dbReference type="Proteomes" id="UP000006377">
    <property type="component" value="Chromosome"/>
</dbReference>
<dbReference type="GO" id="GO:0003871">
    <property type="term" value="F:5-methyltetrahydropteroyltriglutamate-homocysteine S-methyltransferase activity"/>
    <property type="evidence" value="ECO:0007669"/>
    <property type="project" value="UniProtKB-UniRule"/>
</dbReference>
<dbReference type="GO" id="GO:0008270">
    <property type="term" value="F:zinc ion binding"/>
    <property type="evidence" value="ECO:0007669"/>
    <property type="project" value="InterPro"/>
</dbReference>
<dbReference type="GO" id="GO:0009086">
    <property type="term" value="P:methionine biosynthetic process"/>
    <property type="evidence" value="ECO:0007669"/>
    <property type="project" value="UniProtKB-UniRule"/>
</dbReference>
<dbReference type="GO" id="GO:0032259">
    <property type="term" value="P:methylation"/>
    <property type="evidence" value="ECO:0007669"/>
    <property type="project" value="UniProtKB-KW"/>
</dbReference>
<dbReference type="CDD" id="cd03311">
    <property type="entry name" value="CIMS_C_terminal_like"/>
    <property type="match status" value="1"/>
</dbReference>
<dbReference type="CDD" id="cd03312">
    <property type="entry name" value="CIMS_N_terminal_like"/>
    <property type="match status" value="1"/>
</dbReference>
<dbReference type="FunFam" id="3.20.20.210:FF:000002">
    <property type="entry name" value="5-methyltetrahydropteroyltriglutamate--homocysteine methyltransferase"/>
    <property type="match status" value="1"/>
</dbReference>
<dbReference type="FunFam" id="3.20.20.210:FF:000003">
    <property type="entry name" value="5-methyltetrahydropteroyltriglutamate--homocysteine methyltransferase"/>
    <property type="match status" value="1"/>
</dbReference>
<dbReference type="Gene3D" id="3.20.20.210">
    <property type="match status" value="2"/>
</dbReference>
<dbReference type="HAMAP" id="MF_00172">
    <property type="entry name" value="Meth_synth"/>
    <property type="match status" value="1"/>
</dbReference>
<dbReference type="InterPro" id="IPR013215">
    <property type="entry name" value="Cbl-indep_Met_Synth_N"/>
</dbReference>
<dbReference type="InterPro" id="IPR006276">
    <property type="entry name" value="Cobalamin-indep_Met_synthase"/>
</dbReference>
<dbReference type="InterPro" id="IPR002629">
    <property type="entry name" value="Met_Synth_C/arc"/>
</dbReference>
<dbReference type="InterPro" id="IPR038071">
    <property type="entry name" value="UROD/MetE-like_sf"/>
</dbReference>
<dbReference type="NCBIfam" id="TIGR01371">
    <property type="entry name" value="met_syn_B12ind"/>
    <property type="match status" value="1"/>
</dbReference>
<dbReference type="NCBIfam" id="NF003556">
    <property type="entry name" value="PRK05222.1"/>
    <property type="match status" value="1"/>
</dbReference>
<dbReference type="PANTHER" id="PTHR30519">
    <property type="entry name" value="5-METHYLTETRAHYDROPTEROYLTRIGLUTAMATE--HOMOCYSTEINE METHYLTRANSFERASE"/>
    <property type="match status" value="1"/>
</dbReference>
<dbReference type="Pfam" id="PF08267">
    <property type="entry name" value="Meth_synt_1"/>
    <property type="match status" value="1"/>
</dbReference>
<dbReference type="Pfam" id="PF01717">
    <property type="entry name" value="Meth_synt_2"/>
    <property type="match status" value="1"/>
</dbReference>
<dbReference type="PIRSF" id="PIRSF000382">
    <property type="entry name" value="MeTrfase_B12_ind"/>
    <property type="match status" value="1"/>
</dbReference>
<dbReference type="SUPFAM" id="SSF51726">
    <property type="entry name" value="UROD/MetE-like"/>
    <property type="match status" value="2"/>
</dbReference>
<feature type="chain" id="PRO_1000191203" description="5-methyltetrahydropteroyltriglutamate--homocysteine methyltransferase">
    <location>
        <begin position="1"/>
        <end position="763"/>
    </location>
</feature>
<feature type="active site" description="Proton donor" evidence="1">
    <location>
        <position position="701"/>
    </location>
</feature>
<feature type="binding site" evidence="1">
    <location>
        <begin position="16"/>
        <end position="19"/>
    </location>
    <ligand>
        <name>5-methyltetrahydropteroyltri-L-glutamate</name>
        <dbReference type="ChEBI" id="CHEBI:58207"/>
    </ligand>
</feature>
<feature type="binding site" evidence="1">
    <location>
        <position position="114"/>
    </location>
    <ligand>
        <name>5-methyltetrahydropteroyltri-L-glutamate</name>
        <dbReference type="ChEBI" id="CHEBI:58207"/>
    </ligand>
</feature>
<feature type="binding site" evidence="1">
    <location>
        <begin position="438"/>
        <end position="440"/>
    </location>
    <ligand>
        <name>L-homocysteine</name>
        <dbReference type="ChEBI" id="CHEBI:58199"/>
    </ligand>
</feature>
<feature type="binding site" evidence="1">
    <location>
        <begin position="438"/>
        <end position="440"/>
    </location>
    <ligand>
        <name>L-methionine</name>
        <dbReference type="ChEBI" id="CHEBI:57844"/>
    </ligand>
</feature>
<feature type="binding site" evidence="1">
    <location>
        <position position="491"/>
    </location>
    <ligand>
        <name>L-homocysteine</name>
        <dbReference type="ChEBI" id="CHEBI:58199"/>
    </ligand>
</feature>
<feature type="binding site" evidence="1">
    <location>
        <position position="491"/>
    </location>
    <ligand>
        <name>L-methionine</name>
        <dbReference type="ChEBI" id="CHEBI:57844"/>
    </ligand>
</feature>
<feature type="binding site" evidence="1">
    <location>
        <begin position="522"/>
        <end position="523"/>
    </location>
    <ligand>
        <name>5-methyltetrahydropteroyltri-L-glutamate</name>
        <dbReference type="ChEBI" id="CHEBI:58207"/>
    </ligand>
</feature>
<feature type="binding site" evidence="1">
    <location>
        <position position="568"/>
    </location>
    <ligand>
        <name>5-methyltetrahydropteroyltri-L-glutamate</name>
        <dbReference type="ChEBI" id="CHEBI:58207"/>
    </ligand>
</feature>
<feature type="binding site" evidence="1">
    <location>
        <position position="606"/>
    </location>
    <ligand>
        <name>L-homocysteine</name>
        <dbReference type="ChEBI" id="CHEBI:58199"/>
    </ligand>
</feature>
<feature type="binding site" evidence="1">
    <location>
        <position position="606"/>
    </location>
    <ligand>
        <name>L-methionine</name>
        <dbReference type="ChEBI" id="CHEBI:57844"/>
    </ligand>
</feature>
<feature type="binding site" evidence="1">
    <location>
        <position position="612"/>
    </location>
    <ligand>
        <name>5-methyltetrahydropteroyltri-L-glutamate</name>
        <dbReference type="ChEBI" id="CHEBI:58207"/>
    </ligand>
</feature>
<feature type="binding site" evidence="1">
    <location>
        <position position="648"/>
    </location>
    <ligand>
        <name>Zn(2+)</name>
        <dbReference type="ChEBI" id="CHEBI:29105"/>
        <note>catalytic</note>
    </ligand>
</feature>
<feature type="binding site" evidence="1">
    <location>
        <position position="650"/>
    </location>
    <ligand>
        <name>Zn(2+)</name>
        <dbReference type="ChEBI" id="CHEBI:29105"/>
        <note>catalytic</note>
    </ligand>
</feature>
<feature type="binding site" evidence="1">
    <location>
        <position position="672"/>
    </location>
    <ligand>
        <name>Zn(2+)</name>
        <dbReference type="ChEBI" id="CHEBI:29105"/>
        <note>catalytic</note>
    </ligand>
</feature>
<feature type="binding site" evidence="1">
    <location>
        <position position="733"/>
    </location>
    <ligand>
        <name>Zn(2+)</name>
        <dbReference type="ChEBI" id="CHEBI:29105"/>
        <note>catalytic</note>
    </ligand>
</feature>
<name>METE_PARL1</name>
<proteinExistence type="inferred from homology"/>